<dbReference type="EC" id="2.7.11.1"/>
<dbReference type="EMBL" id="AC025416">
    <property type="protein sequence ID" value="AAF79640.1"/>
    <property type="status" value="ALT_SEQ"/>
    <property type="molecule type" value="Genomic_DNA"/>
</dbReference>
<dbReference type="EMBL" id="AC025417">
    <property type="protein sequence ID" value="AAF88073.1"/>
    <property type="status" value="ALT_SEQ"/>
    <property type="molecule type" value="Genomic_DNA"/>
</dbReference>
<dbReference type="EMBL" id="CP002684">
    <property type="protein sequence ID" value="AEE28886.1"/>
    <property type="molecule type" value="Genomic_DNA"/>
</dbReference>
<dbReference type="EMBL" id="BT002951">
    <property type="protein sequence ID" value="AAO22764.1"/>
    <property type="molecule type" value="mRNA"/>
</dbReference>
<dbReference type="EMBL" id="FJ708633">
    <property type="protein sequence ID" value="ACN59229.1"/>
    <property type="molecule type" value="mRNA"/>
</dbReference>
<dbReference type="EMBL" id="AK317750">
    <property type="protein sequence ID" value="BAH20406.1"/>
    <property type="molecule type" value="mRNA"/>
</dbReference>
<dbReference type="RefSeq" id="NP_172708.1">
    <property type="nucleotide sequence ID" value="NM_101118.4"/>
</dbReference>
<dbReference type="SMR" id="C0LGE4"/>
<dbReference type="BioGRID" id="23043">
    <property type="interactions" value="19"/>
</dbReference>
<dbReference type="FunCoup" id="C0LGE4">
    <property type="interactions" value="911"/>
</dbReference>
<dbReference type="IntAct" id="C0LGE4">
    <property type="interactions" value="25"/>
</dbReference>
<dbReference type="STRING" id="3702.C0LGE4"/>
<dbReference type="GlyGen" id="C0LGE4">
    <property type="glycosylation" value="11 sites"/>
</dbReference>
<dbReference type="iPTMnet" id="C0LGE4"/>
<dbReference type="PaxDb" id="3702-AT1G12460.1"/>
<dbReference type="ProteomicsDB" id="243181"/>
<dbReference type="EnsemblPlants" id="AT1G12460.1">
    <property type="protein sequence ID" value="AT1G12460.1"/>
    <property type="gene ID" value="AT1G12460"/>
</dbReference>
<dbReference type="GeneID" id="837803"/>
<dbReference type="Gramene" id="AT1G12460.1">
    <property type="protein sequence ID" value="AT1G12460.1"/>
    <property type="gene ID" value="AT1G12460"/>
</dbReference>
<dbReference type="KEGG" id="ath:AT1G12460"/>
<dbReference type="Araport" id="AT1G12460"/>
<dbReference type="TAIR" id="AT1G12460"/>
<dbReference type="eggNOG" id="ENOG502QUME">
    <property type="taxonomic scope" value="Eukaryota"/>
</dbReference>
<dbReference type="HOGENOM" id="CLU_000288_22_1_1"/>
<dbReference type="InParanoid" id="C0LGE4"/>
<dbReference type="OMA" id="HAAIGYI"/>
<dbReference type="PhylomeDB" id="C0LGE4"/>
<dbReference type="PRO" id="PR:C0LGE4"/>
<dbReference type="Proteomes" id="UP000006548">
    <property type="component" value="Chromosome 1"/>
</dbReference>
<dbReference type="ExpressionAtlas" id="C0LGE4">
    <property type="expression patterns" value="baseline and differential"/>
</dbReference>
<dbReference type="GO" id="GO:0005886">
    <property type="term" value="C:plasma membrane"/>
    <property type="evidence" value="ECO:0007669"/>
    <property type="project" value="UniProtKB-SubCell"/>
</dbReference>
<dbReference type="GO" id="GO:0005524">
    <property type="term" value="F:ATP binding"/>
    <property type="evidence" value="ECO:0007669"/>
    <property type="project" value="UniProtKB-KW"/>
</dbReference>
<dbReference type="GO" id="GO:0106310">
    <property type="term" value="F:protein serine kinase activity"/>
    <property type="evidence" value="ECO:0007669"/>
    <property type="project" value="RHEA"/>
</dbReference>
<dbReference type="GO" id="GO:0004674">
    <property type="term" value="F:protein serine/threonine kinase activity"/>
    <property type="evidence" value="ECO:0007669"/>
    <property type="project" value="UniProtKB-KW"/>
</dbReference>
<dbReference type="CDD" id="cd14066">
    <property type="entry name" value="STKc_IRAK"/>
    <property type="match status" value="1"/>
</dbReference>
<dbReference type="FunFam" id="3.80.10.10:FF:000711">
    <property type="entry name" value="Probable LRR receptor-like serine/threonine-protein kinase At1g12460"/>
    <property type="match status" value="1"/>
</dbReference>
<dbReference type="FunFam" id="3.80.10.10:FF:000486">
    <property type="entry name" value="probable LRR receptor-like serine/threonine-protein kinase At1g12460"/>
    <property type="match status" value="1"/>
</dbReference>
<dbReference type="FunFam" id="1.10.510.10:FF:000267">
    <property type="entry name" value="probable LRR receptor-like serine/threonine-protein kinase IRK"/>
    <property type="match status" value="1"/>
</dbReference>
<dbReference type="FunFam" id="3.30.200.20:FF:000450">
    <property type="entry name" value="Putative LRR receptor-like serine/threonine-protein kinase"/>
    <property type="match status" value="1"/>
</dbReference>
<dbReference type="Gene3D" id="3.30.200.20">
    <property type="entry name" value="Phosphorylase Kinase, domain 1"/>
    <property type="match status" value="1"/>
</dbReference>
<dbReference type="Gene3D" id="3.80.10.10">
    <property type="entry name" value="Ribonuclease Inhibitor"/>
    <property type="match status" value="2"/>
</dbReference>
<dbReference type="Gene3D" id="1.10.510.10">
    <property type="entry name" value="Transferase(Phosphotransferase) domain 1"/>
    <property type="match status" value="1"/>
</dbReference>
<dbReference type="InterPro" id="IPR011009">
    <property type="entry name" value="Kinase-like_dom_sf"/>
</dbReference>
<dbReference type="InterPro" id="IPR001611">
    <property type="entry name" value="Leu-rich_rpt"/>
</dbReference>
<dbReference type="InterPro" id="IPR003591">
    <property type="entry name" value="Leu-rich_rpt_typical-subtyp"/>
</dbReference>
<dbReference type="InterPro" id="IPR032675">
    <property type="entry name" value="LRR_dom_sf"/>
</dbReference>
<dbReference type="InterPro" id="IPR013210">
    <property type="entry name" value="LRR_N_plant-typ"/>
</dbReference>
<dbReference type="InterPro" id="IPR050647">
    <property type="entry name" value="Plant_LRR-RLKs"/>
</dbReference>
<dbReference type="InterPro" id="IPR000719">
    <property type="entry name" value="Prot_kinase_dom"/>
</dbReference>
<dbReference type="InterPro" id="IPR001245">
    <property type="entry name" value="Ser-Thr/Tyr_kinase_cat_dom"/>
</dbReference>
<dbReference type="PANTHER" id="PTHR48056">
    <property type="entry name" value="LRR RECEPTOR-LIKE SERINE/THREONINE-PROTEIN KINASE-RELATED"/>
    <property type="match status" value="1"/>
</dbReference>
<dbReference type="PANTHER" id="PTHR48056:SF13">
    <property type="entry name" value="PROTEIN KINASE DOMAIN-CONTAINING PROTEIN"/>
    <property type="match status" value="1"/>
</dbReference>
<dbReference type="Pfam" id="PF00560">
    <property type="entry name" value="LRR_1"/>
    <property type="match status" value="5"/>
</dbReference>
<dbReference type="Pfam" id="PF08263">
    <property type="entry name" value="LRRNT_2"/>
    <property type="match status" value="1"/>
</dbReference>
<dbReference type="Pfam" id="PF07714">
    <property type="entry name" value="PK_Tyr_Ser-Thr"/>
    <property type="match status" value="1"/>
</dbReference>
<dbReference type="SMART" id="SM00369">
    <property type="entry name" value="LRR_TYP"/>
    <property type="match status" value="3"/>
</dbReference>
<dbReference type="SUPFAM" id="SSF52058">
    <property type="entry name" value="L domain-like"/>
    <property type="match status" value="2"/>
</dbReference>
<dbReference type="SUPFAM" id="SSF56112">
    <property type="entry name" value="Protein kinase-like (PK-like)"/>
    <property type="match status" value="1"/>
</dbReference>
<dbReference type="PROSITE" id="PS50011">
    <property type="entry name" value="PROTEIN_KINASE_DOM"/>
    <property type="match status" value="1"/>
</dbReference>
<proteinExistence type="evidence at protein level"/>
<sequence length="882" mass="97022">MRKVHLFLVLVHFIYISTSRSDSISERDILLQFKGSISDDPYNSLASWVSDGDLCNSFNGITCNPQGFVDKIVLWNTSLAGTLAPGLSNLKFIRVLNLFGNRFTGNLPLDYFKLQTLWTINVSSNALSGPIPEFISELSSLRFLDLSKNGFTGEIPVSLFKFCDKTKFVSLAHNNIFGSIPASIVNCNNLVGFDFSYNNLKGVLPPRICDIPVLEYISVRNNLLSGDVSEEIQKCQRLILVDLGSNLFHGLAPFAVLTFKNITYFNVSWNRFGGEIGEIVDCSESLEFLDASSNELTGRIPTGVMGCKSLKLLDLESNKLNGSIPGSIGKMESLSVIRLGNNSIDGVIPRDIGSLEFLQVLNLHNLNLIGEVPEDISNCRVLLELDVSGNDLEGKISKKLLNLTNIKILDLHRNRLNGSIPPELGNLSKVQFLDLSQNSLSGPIPSSLGSLNTLTHFNVSYNNLSGVIPPVPMIQAFGSSAFSNNPFLCGDPLVTPCNSRGAAAKSRNSDALSISVIIVIIAAAVILFGVCIVLALNLRARKRRKDEEILTVETTPLASSIDSSGVIIGKLVLFSKNLPSKYEDWEAGTKALLDKENIIGMGSIGSVYRASFEGGVSIAVKKLETLGRIRNQEEFEQEIGRLGGLQHPNLSSFQGYYFSSTMQLILSEFVPNGSLYDNLHLRIFPGTSSSYGNTDLNWHRRFQIALGTAKALSFLHNDCKPAILHLNVKSTNILLDERYEAKLSDYGLEKFLPVMDSFGLTKKFHNAVGYIAPELAQQSLRASEKCDVYSYGVVLLELVTGRKPVESPSENQVLILRDYVRDLLETGSASDCFDRRLREFEENELIQVMKLGLLCTSENPLKRPSMAEVVQVLESIRNGFGS</sequence>
<protein>
    <recommendedName>
        <fullName>Probable LRR receptor-like serine/threonine-protein kinase At1g12460</fullName>
        <ecNumber>2.7.11.1</ecNumber>
    </recommendedName>
</protein>
<comment type="catalytic activity">
    <reaction>
        <text>L-seryl-[protein] + ATP = O-phospho-L-seryl-[protein] + ADP + H(+)</text>
        <dbReference type="Rhea" id="RHEA:17989"/>
        <dbReference type="Rhea" id="RHEA-COMP:9863"/>
        <dbReference type="Rhea" id="RHEA-COMP:11604"/>
        <dbReference type="ChEBI" id="CHEBI:15378"/>
        <dbReference type="ChEBI" id="CHEBI:29999"/>
        <dbReference type="ChEBI" id="CHEBI:30616"/>
        <dbReference type="ChEBI" id="CHEBI:83421"/>
        <dbReference type="ChEBI" id="CHEBI:456216"/>
        <dbReference type="EC" id="2.7.11.1"/>
    </reaction>
</comment>
<comment type="catalytic activity">
    <reaction>
        <text>L-threonyl-[protein] + ATP = O-phospho-L-threonyl-[protein] + ADP + H(+)</text>
        <dbReference type="Rhea" id="RHEA:46608"/>
        <dbReference type="Rhea" id="RHEA-COMP:11060"/>
        <dbReference type="Rhea" id="RHEA-COMP:11605"/>
        <dbReference type="ChEBI" id="CHEBI:15378"/>
        <dbReference type="ChEBI" id="CHEBI:30013"/>
        <dbReference type="ChEBI" id="CHEBI:30616"/>
        <dbReference type="ChEBI" id="CHEBI:61977"/>
        <dbReference type="ChEBI" id="CHEBI:456216"/>
        <dbReference type="EC" id="2.7.11.1"/>
    </reaction>
</comment>
<comment type="interaction">
    <interactant intactId="EBI-17126713">
        <id>C0LGE4</id>
    </interactant>
    <interactant intactId="EBI-20652336">
        <id>A0A178WLG7</id>
        <label>At1g51790</label>
    </interactant>
    <organismsDiffer>false</organismsDiffer>
    <experiments>3</experiments>
</comment>
<comment type="interaction">
    <interactant intactId="EBI-17126713">
        <id>C0LGE4</id>
    </interactant>
    <interactant intactId="EBI-20651541">
        <id>C0LGJ9</id>
        <label>At2g02780</label>
    </interactant>
    <organismsDiffer>false</organismsDiffer>
    <experiments>2</experiments>
</comment>
<comment type="interaction">
    <interactant intactId="EBI-17126713">
        <id>C0LGE4</id>
    </interactant>
    <interactant intactId="EBI-16946048">
        <id>C0LGL4</id>
        <label>At2g28960</label>
    </interactant>
    <organismsDiffer>false</organismsDiffer>
    <experiments>3</experiments>
</comment>
<comment type="interaction">
    <interactant intactId="EBI-17126713">
        <id>C0LGE4</id>
    </interactant>
    <interactant intactId="EBI-20652362">
        <id>A0A1P8BAS1</id>
        <label>At5g01950</label>
    </interactant>
    <organismsDiffer>false</organismsDiffer>
    <experiments>2</experiments>
</comment>
<comment type="interaction">
    <interactant intactId="EBI-17126713">
        <id>C0LGE4</id>
    </interactant>
    <interactant intactId="EBI-6299033">
        <id>Q9XIC7</id>
        <label>SERK2</label>
    </interactant>
    <organismsDiffer>false</organismsDiffer>
    <experiments>4</experiments>
</comment>
<comment type="interaction">
    <interactant intactId="EBI-17126713">
        <id>C0LGE4</id>
    </interactant>
    <interactant intactId="EBI-16905038">
        <id>O64483</id>
        <label>SIRK</label>
    </interactant>
    <organismsDiffer>false</organismsDiffer>
    <experiments>2</experiments>
</comment>
<comment type="subcellular location">
    <subcellularLocation>
        <location evidence="1">Cell membrane</location>
        <topology evidence="1">Single-pass type I membrane protein</topology>
    </subcellularLocation>
</comment>
<comment type="similarity">
    <text evidence="5">Belongs to the protein kinase superfamily. Ser/Thr protein kinase family.</text>
</comment>
<comment type="sequence caution" evidence="6">
    <conflict type="erroneous gene model prediction">
        <sequence resource="EMBL-CDS" id="AAF79640"/>
    </conflict>
</comment>
<comment type="sequence caution" evidence="6">
    <conflict type="erroneous gene model prediction">
        <sequence resource="EMBL-CDS" id="AAF88073"/>
    </conflict>
</comment>
<accession>C0LGE4</accession>
<accession>B9DI39</accession>
<accession>Q84WP1</accession>
<accession>Q9LN92</accession>
<accession>Q9LN98</accession>
<name>Y1124_ARATH</name>
<feature type="signal peptide" evidence="4">
    <location>
        <begin position="1"/>
        <end position="21"/>
    </location>
</feature>
<feature type="chain" id="PRO_0000387524" description="Probable LRR receptor-like serine/threonine-protein kinase At1g12460">
    <location>
        <begin position="22"/>
        <end position="882"/>
    </location>
</feature>
<feature type="topological domain" description="Extracellular" evidence="4">
    <location>
        <begin position="22"/>
        <end position="515"/>
    </location>
</feature>
<feature type="transmembrane region" description="Helical" evidence="4">
    <location>
        <begin position="516"/>
        <end position="536"/>
    </location>
</feature>
<feature type="topological domain" description="Cytoplasmic" evidence="4">
    <location>
        <begin position="537"/>
        <end position="882"/>
    </location>
</feature>
<feature type="repeat" description="LRR 1">
    <location>
        <begin position="92"/>
        <end position="113"/>
    </location>
</feature>
<feature type="repeat" description="LRR 2">
    <location>
        <begin position="116"/>
        <end position="138"/>
    </location>
</feature>
<feature type="repeat" description="LRR 3">
    <location>
        <begin position="140"/>
        <end position="162"/>
    </location>
</feature>
<feature type="repeat" description="LRR 4">
    <location>
        <begin position="165"/>
        <end position="187"/>
    </location>
</feature>
<feature type="repeat" description="LRR 5">
    <location>
        <begin position="189"/>
        <end position="210"/>
    </location>
</feature>
<feature type="repeat" description="LRR 6">
    <location>
        <begin position="213"/>
        <end position="235"/>
    </location>
</feature>
<feature type="repeat" description="LRR 7">
    <location>
        <begin position="237"/>
        <end position="258"/>
    </location>
</feature>
<feature type="repeat" description="LRR 8">
    <location>
        <begin position="261"/>
        <end position="283"/>
    </location>
</feature>
<feature type="repeat" description="LRR 9">
    <location>
        <begin position="285"/>
        <end position="308"/>
    </location>
</feature>
<feature type="repeat" description="LRR 10">
    <location>
        <begin position="309"/>
        <end position="331"/>
    </location>
</feature>
<feature type="repeat" description="LRR 11">
    <location>
        <begin position="333"/>
        <end position="355"/>
    </location>
</feature>
<feature type="repeat" description="LRR 12">
    <location>
        <begin position="357"/>
        <end position="379"/>
    </location>
</feature>
<feature type="repeat" description="LRR 13">
    <location>
        <begin position="381"/>
        <end position="404"/>
    </location>
</feature>
<feature type="repeat" description="LRR 14">
    <location>
        <begin position="405"/>
        <end position="427"/>
    </location>
</feature>
<feature type="repeat" description="LRR 15">
    <location>
        <begin position="429"/>
        <end position="451"/>
    </location>
</feature>
<feature type="repeat" description="LRR 16">
    <location>
        <begin position="453"/>
        <end position="475"/>
    </location>
</feature>
<feature type="domain" description="Protein kinase" evidence="5">
    <location>
        <begin position="593"/>
        <end position="876"/>
    </location>
</feature>
<feature type="binding site" evidence="5">
    <location>
        <begin position="599"/>
        <end position="607"/>
    </location>
    <ligand>
        <name>ATP</name>
        <dbReference type="ChEBI" id="CHEBI:30616"/>
    </ligand>
</feature>
<feature type="binding site" evidence="5">
    <location>
        <position position="621"/>
    </location>
    <ligand>
        <name>ATP</name>
        <dbReference type="ChEBI" id="CHEBI:30616"/>
    </ligand>
</feature>
<feature type="modified residue" description="Phosphothreonine" evidence="3">
    <location>
        <position position="589"/>
    </location>
</feature>
<feature type="modified residue" description="Phosphotyrosine" evidence="2">
    <location>
        <position position="770"/>
    </location>
</feature>
<feature type="glycosylation site" description="N-linked (GlcNAc...) asparagine" evidence="4">
    <location>
        <position position="76"/>
    </location>
</feature>
<feature type="glycosylation site" description="N-linked (GlcNAc...) asparagine" evidence="4">
    <location>
        <position position="121"/>
    </location>
</feature>
<feature type="glycosylation site" description="N-linked (GlcNAc...) asparagine" evidence="4">
    <location>
        <position position="261"/>
    </location>
</feature>
<feature type="glycosylation site" description="N-linked (GlcNAc...) asparagine" evidence="4">
    <location>
        <position position="266"/>
    </location>
</feature>
<feature type="glycosylation site" description="N-linked (GlcNAc...) asparagine" evidence="4">
    <location>
        <position position="321"/>
    </location>
</feature>
<feature type="glycosylation site" description="N-linked (GlcNAc...) asparagine" evidence="4">
    <location>
        <position position="341"/>
    </location>
</feature>
<feature type="glycosylation site" description="N-linked (GlcNAc...) asparagine" evidence="4">
    <location>
        <position position="402"/>
    </location>
</feature>
<feature type="glycosylation site" description="N-linked (GlcNAc...) asparagine" evidence="4">
    <location>
        <position position="417"/>
    </location>
</feature>
<feature type="glycosylation site" description="N-linked (GlcNAc...) asparagine" evidence="4">
    <location>
        <position position="426"/>
    </location>
</feature>
<feature type="glycosylation site" description="N-linked (GlcNAc...) asparagine" evidence="4">
    <location>
        <position position="458"/>
    </location>
</feature>
<feature type="glycosylation site" description="N-linked (GlcNAc...) asparagine" evidence="4">
    <location>
        <position position="463"/>
    </location>
</feature>
<feature type="sequence conflict" description="In Ref. 3; AAO22764." evidence="6" ref="3">
    <original>T</original>
    <variation>A</variation>
    <location>
        <position position="82"/>
    </location>
</feature>
<organism>
    <name type="scientific">Arabidopsis thaliana</name>
    <name type="common">Mouse-ear cress</name>
    <dbReference type="NCBI Taxonomy" id="3702"/>
    <lineage>
        <taxon>Eukaryota</taxon>
        <taxon>Viridiplantae</taxon>
        <taxon>Streptophyta</taxon>
        <taxon>Embryophyta</taxon>
        <taxon>Tracheophyta</taxon>
        <taxon>Spermatophyta</taxon>
        <taxon>Magnoliopsida</taxon>
        <taxon>eudicotyledons</taxon>
        <taxon>Gunneridae</taxon>
        <taxon>Pentapetalae</taxon>
        <taxon>rosids</taxon>
        <taxon>malvids</taxon>
        <taxon>Brassicales</taxon>
        <taxon>Brassicaceae</taxon>
        <taxon>Camelineae</taxon>
        <taxon>Arabidopsis</taxon>
    </lineage>
</organism>
<reference key="1">
    <citation type="journal article" date="2000" name="Nature">
        <title>Sequence and analysis of chromosome 1 of the plant Arabidopsis thaliana.</title>
        <authorList>
            <person name="Theologis A."/>
            <person name="Ecker J.R."/>
            <person name="Palm C.J."/>
            <person name="Federspiel N.A."/>
            <person name="Kaul S."/>
            <person name="White O."/>
            <person name="Alonso J."/>
            <person name="Altafi H."/>
            <person name="Araujo R."/>
            <person name="Bowman C.L."/>
            <person name="Brooks S.Y."/>
            <person name="Buehler E."/>
            <person name="Chan A."/>
            <person name="Chao Q."/>
            <person name="Chen H."/>
            <person name="Cheuk R.F."/>
            <person name="Chin C.W."/>
            <person name="Chung M.K."/>
            <person name="Conn L."/>
            <person name="Conway A.B."/>
            <person name="Conway A.R."/>
            <person name="Creasy T.H."/>
            <person name="Dewar K."/>
            <person name="Dunn P."/>
            <person name="Etgu P."/>
            <person name="Feldblyum T.V."/>
            <person name="Feng J.-D."/>
            <person name="Fong B."/>
            <person name="Fujii C.Y."/>
            <person name="Gill J.E."/>
            <person name="Goldsmith A.D."/>
            <person name="Haas B."/>
            <person name="Hansen N.F."/>
            <person name="Hughes B."/>
            <person name="Huizar L."/>
            <person name="Hunter J.L."/>
            <person name="Jenkins J."/>
            <person name="Johnson-Hopson C."/>
            <person name="Khan S."/>
            <person name="Khaykin E."/>
            <person name="Kim C.J."/>
            <person name="Koo H.L."/>
            <person name="Kremenetskaia I."/>
            <person name="Kurtz D.B."/>
            <person name="Kwan A."/>
            <person name="Lam B."/>
            <person name="Langin-Hooper S."/>
            <person name="Lee A."/>
            <person name="Lee J.M."/>
            <person name="Lenz C.A."/>
            <person name="Li J.H."/>
            <person name="Li Y.-P."/>
            <person name="Lin X."/>
            <person name="Liu S.X."/>
            <person name="Liu Z.A."/>
            <person name="Luros J.S."/>
            <person name="Maiti R."/>
            <person name="Marziali A."/>
            <person name="Militscher J."/>
            <person name="Miranda M."/>
            <person name="Nguyen M."/>
            <person name="Nierman W.C."/>
            <person name="Osborne B.I."/>
            <person name="Pai G."/>
            <person name="Peterson J."/>
            <person name="Pham P.K."/>
            <person name="Rizzo M."/>
            <person name="Rooney T."/>
            <person name="Rowley D."/>
            <person name="Sakano H."/>
            <person name="Salzberg S.L."/>
            <person name="Schwartz J.R."/>
            <person name="Shinn P."/>
            <person name="Southwick A.M."/>
            <person name="Sun H."/>
            <person name="Tallon L.J."/>
            <person name="Tambunga G."/>
            <person name="Toriumi M.J."/>
            <person name="Town C.D."/>
            <person name="Utterback T."/>
            <person name="Van Aken S."/>
            <person name="Vaysberg M."/>
            <person name="Vysotskaia V.S."/>
            <person name="Walker M."/>
            <person name="Wu D."/>
            <person name="Yu G."/>
            <person name="Fraser C.M."/>
            <person name="Venter J.C."/>
            <person name="Davis R.W."/>
        </authorList>
    </citation>
    <scope>NUCLEOTIDE SEQUENCE [LARGE SCALE GENOMIC DNA]</scope>
    <source>
        <strain>cv. Columbia</strain>
    </source>
</reference>
<reference key="2">
    <citation type="journal article" date="2017" name="Plant J.">
        <title>Araport11: a complete reannotation of the Arabidopsis thaliana reference genome.</title>
        <authorList>
            <person name="Cheng C.Y."/>
            <person name="Krishnakumar V."/>
            <person name="Chan A.P."/>
            <person name="Thibaud-Nissen F."/>
            <person name="Schobel S."/>
            <person name="Town C.D."/>
        </authorList>
    </citation>
    <scope>GENOME REANNOTATION</scope>
    <source>
        <strain>cv. Columbia</strain>
    </source>
</reference>
<reference key="3">
    <citation type="journal article" date="2003" name="Science">
        <title>Empirical analysis of transcriptional activity in the Arabidopsis genome.</title>
        <authorList>
            <person name="Yamada K."/>
            <person name="Lim J."/>
            <person name="Dale J.M."/>
            <person name="Chen H."/>
            <person name="Shinn P."/>
            <person name="Palm C.J."/>
            <person name="Southwick A.M."/>
            <person name="Wu H.C."/>
            <person name="Kim C.J."/>
            <person name="Nguyen M."/>
            <person name="Pham P.K."/>
            <person name="Cheuk R.F."/>
            <person name="Karlin-Newmann G."/>
            <person name="Liu S.X."/>
            <person name="Lam B."/>
            <person name="Sakano H."/>
            <person name="Wu T."/>
            <person name="Yu G."/>
            <person name="Miranda M."/>
            <person name="Quach H.L."/>
            <person name="Tripp M."/>
            <person name="Chang C.H."/>
            <person name="Lee J.M."/>
            <person name="Toriumi M.J."/>
            <person name="Chan M.M."/>
            <person name="Tang C.C."/>
            <person name="Onodera C.S."/>
            <person name="Deng J.M."/>
            <person name="Akiyama K."/>
            <person name="Ansari Y."/>
            <person name="Arakawa T."/>
            <person name="Banh J."/>
            <person name="Banno F."/>
            <person name="Bowser L."/>
            <person name="Brooks S.Y."/>
            <person name="Carninci P."/>
            <person name="Chao Q."/>
            <person name="Choy N."/>
            <person name="Enju A."/>
            <person name="Goldsmith A.D."/>
            <person name="Gurjal M."/>
            <person name="Hansen N.F."/>
            <person name="Hayashizaki Y."/>
            <person name="Johnson-Hopson C."/>
            <person name="Hsuan V.W."/>
            <person name="Iida K."/>
            <person name="Karnes M."/>
            <person name="Khan S."/>
            <person name="Koesema E."/>
            <person name="Ishida J."/>
            <person name="Jiang P.X."/>
            <person name="Jones T."/>
            <person name="Kawai J."/>
            <person name="Kamiya A."/>
            <person name="Meyers C."/>
            <person name="Nakajima M."/>
            <person name="Narusaka M."/>
            <person name="Seki M."/>
            <person name="Sakurai T."/>
            <person name="Satou M."/>
            <person name="Tamse R."/>
            <person name="Vaysberg M."/>
            <person name="Wallender E.K."/>
            <person name="Wong C."/>
            <person name="Yamamura Y."/>
            <person name="Yuan S."/>
            <person name="Shinozaki K."/>
            <person name="Davis R.W."/>
            <person name="Theologis A."/>
            <person name="Ecker J.R."/>
        </authorList>
    </citation>
    <scope>NUCLEOTIDE SEQUENCE [LARGE SCALE MRNA]</scope>
    <source>
        <strain>cv. Columbia</strain>
    </source>
</reference>
<reference key="4">
    <citation type="journal article" date="2010" name="BMC Genomics">
        <title>Genome-wide cloning and sequence analysis of leucine-rich repeat receptor-like protein kinase genes in Arabidopsis thaliana.</title>
        <authorList>
            <person name="Gou X."/>
            <person name="He K."/>
            <person name="Yang H."/>
            <person name="Yuan T."/>
            <person name="Lin H."/>
            <person name="Clouse S.D."/>
            <person name="Li J."/>
        </authorList>
    </citation>
    <scope>NUCLEOTIDE SEQUENCE [LARGE SCALE MRNA]</scope>
    <source>
        <strain>cv. Columbia</strain>
    </source>
</reference>
<reference key="5">
    <citation type="journal article" date="2009" name="DNA Res.">
        <title>Analysis of multiple occurrences of alternative splicing events in Arabidopsis thaliana using novel sequenced full-length cDNAs.</title>
        <authorList>
            <person name="Iida K."/>
            <person name="Fukami-Kobayashi K."/>
            <person name="Toyoda A."/>
            <person name="Sakaki Y."/>
            <person name="Kobayashi M."/>
            <person name="Seki M."/>
            <person name="Shinozaki K."/>
        </authorList>
    </citation>
    <scope>NUCLEOTIDE SEQUENCE [LARGE SCALE MRNA] OF 259-882</scope>
    <source>
        <strain>cv. Columbia</strain>
        <tissue>Flower</tissue>
        <tissue>Silique</tissue>
    </source>
</reference>
<evidence type="ECO:0000250" key="1"/>
<evidence type="ECO:0000250" key="2">
    <source>
        <dbReference type="UniProtKB" id="C0LGT6"/>
    </source>
</evidence>
<evidence type="ECO:0000250" key="3">
    <source>
        <dbReference type="UniProtKB" id="O22476"/>
    </source>
</evidence>
<evidence type="ECO:0000255" key="4"/>
<evidence type="ECO:0000255" key="5">
    <source>
        <dbReference type="PROSITE-ProRule" id="PRU00159"/>
    </source>
</evidence>
<evidence type="ECO:0000305" key="6"/>
<gene>
    <name type="ordered locus">At1g12460</name>
    <name type="ORF">F5O11.21</name>
    <name type="ORF">T12C24.1</name>
</gene>
<keyword id="KW-0067">ATP-binding</keyword>
<keyword id="KW-1003">Cell membrane</keyword>
<keyword id="KW-0325">Glycoprotein</keyword>
<keyword id="KW-0418">Kinase</keyword>
<keyword id="KW-0433">Leucine-rich repeat</keyword>
<keyword id="KW-0472">Membrane</keyword>
<keyword id="KW-0547">Nucleotide-binding</keyword>
<keyword id="KW-0597">Phosphoprotein</keyword>
<keyword id="KW-0675">Receptor</keyword>
<keyword id="KW-1185">Reference proteome</keyword>
<keyword id="KW-0677">Repeat</keyword>
<keyword id="KW-0723">Serine/threonine-protein kinase</keyword>
<keyword id="KW-0732">Signal</keyword>
<keyword id="KW-0808">Transferase</keyword>
<keyword id="KW-0812">Transmembrane</keyword>
<keyword id="KW-1133">Transmembrane helix</keyword>